<keyword id="KW-0028">Amino-acid biosynthesis</keyword>
<keyword id="KW-0057">Aromatic amino acid biosynthesis</keyword>
<keyword id="KW-0067">ATP-binding</keyword>
<keyword id="KW-0963">Cytoplasm</keyword>
<keyword id="KW-0418">Kinase</keyword>
<keyword id="KW-0456">Lyase</keyword>
<keyword id="KW-0479">Metal-binding</keyword>
<keyword id="KW-0511">Multifunctional enzyme</keyword>
<keyword id="KW-0521">NADP</keyword>
<keyword id="KW-0547">Nucleotide-binding</keyword>
<keyword id="KW-0560">Oxidoreductase</keyword>
<keyword id="KW-1185">Reference proteome</keyword>
<keyword id="KW-0808">Transferase</keyword>
<keyword id="KW-0862">Zinc</keyword>
<feature type="chain" id="PRO_0000406722" description="Pentafunctional AROM polypeptide">
    <location>
        <begin position="1"/>
        <end position="1590"/>
    </location>
</feature>
<feature type="region of interest" description="3-dehydroquinate synthase">
    <location>
        <begin position="1"/>
        <end position="400"/>
    </location>
</feature>
<feature type="region of interest" description="EPSP synthase">
    <location>
        <begin position="413"/>
        <end position="856"/>
    </location>
</feature>
<feature type="region of interest" description="Shikimate kinase">
    <location>
        <begin position="876"/>
        <end position="1070"/>
    </location>
</feature>
<feature type="region of interest" description="3-dehydroquinase">
    <location>
        <begin position="1071"/>
        <end position="1285"/>
    </location>
</feature>
<feature type="region of interest" description="Shikimate dehydrogenase">
    <location>
        <begin position="1298"/>
        <end position="1590"/>
    </location>
</feature>
<feature type="active site" description="Proton acceptor; for 3-dehydroquinate synthase activity" evidence="1">
    <location>
        <position position="276"/>
    </location>
</feature>
<feature type="active site" description="Proton acceptor; for 3-dehydroquinate synthase activity" evidence="1">
    <location>
        <position position="291"/>
    </location>
</feature>
<feature type="active site" description="For EPSP synthase activity" evidence="1">
    <location>
        <position position="838"/>
    </location>
</feature>
<feature type="active site" description="Proton acceptor; for 3-dehydroquinate dehydratase activity" evidence="1">
    <location>
        <position position="1187"/>
    </location>
</feature>
<feature type="active site" description="Schiff-base intermediate with substrate; for 3-dehydroquinate dehydratase activity" evidence="1">
    <location>
        <position position="1215"/>
    </location>
</feature>
<feature type="binding site" evidence="1">
    <location>
        <begin position="49"/>
        <end position="51"/>
    </location>
    <ligand>
        <name>NAD(+)</name>
        <dbReference type="ChEBI" id="CHEBI:57540"/>
    </ligand>
</feature>
<feature type="binding site" evidence="1">
    <location>
        <begin position="96"/>
        <end position="99"/>
    </location>
    <ligand>
        <name>NAD(+)</name>
        <dbReference type="ChEBI" id="CHEBI:57540"/>
    </ligand>
</feature>
<feature type="binding site" evidence="1">
    <location>
        <begin position="127"/>
        <end position="129"/>
    </location>
    <ligand>
        <name>NAD(+)</name>
        <dbReference type="ChEBI" id="CHEBI:57540"/>
    </ligand>
</feature>
<feature type="binding site" evidence="1">
    <location>
        <position position="132"/>
    </location>
    <ligand>
        <name>NAD(+)</name>
        <dbReference type="ChEBI" id="CHEBI:57540"/>
    </ligand>
</feature>
<feature type="binding site" evidence="1">
    <location>
        <position position="143"/>
    </location>
    <ligand>
        <name>7-phospho-2-dehydro-3-deoxy-D-arabino-heptonate</name>
        <dbReference type="ChEBI" id="CHEBI:58394"/>
    </ligand>
</feature>
<feature type="binding site" evidence="1">
    <location>
        <begin position="152"/>
        <end position="153"/>
    </location>
    <ligand>
        <name>NAD(+)</name>
        <dbReference type="ChEBI" id="CHEBI:57540"/>
    </ligand>
</feature>
<feature type="binding site" evidence="1">
    <location>
        <position position="159"/>
    </location>
    <ligand>
        <name>7-phospho-2-dehydro-3-deoxy-D-arabino-heptonate</name>
        <dbReference type="ChEBI" id="CHEBI:58394"/>
    </ligand>
</feature>
<feature type="binding site" evidence="1">
    <location>
        <position position="165"/>
    </location>
    <ligand>
        <name>7-phospho-2-dehydro-3-deoxy-D-arabino-heptonate</name>
        <dbReference type="ChEBI" id="CHEBI:58394"/>
    </ligand>
</feature>
<feature type="binding site" evidence="1">
    <location>
        <position position="174"/>
    </location>
    <ligand>
        <name>NAD(+)</name>
        <dbReference type="ChEBI" id="CHEBI:57540"/>
    </ligand>
</feature>
<feature type="binding site" evidence="1">
    <location>
        <position position="175"/>
    </location>
    <ligand>
        <name>7-phospho-2-dehydro-3-deoxy-D-arabino-heptonate</name>
        <dbReference type="ChEBI" id="CHEBI:58394"/>
    </ligand>
</feature>
<feature type="binding site" evidence="1">
    <location>
        <begin position="192"/>
        <end position="195"/>
    </location>
    <ligand>
        <name>NAD(+)</name>
        <dbReference type="ChEBI" id="CHEBI:57540"/>
    </ligand>
</feature>
<feature type="binding site" evidence="1">
    <location>
        <position position="203"/>
    </location>
    <ligand>
        <name>NAD(+)</name>
        <dbReference type="ChEBI" id="CHEBI:57540"/>
    </ligand>
</feature>
<feature type="binding site" evidence="1">
    <location>
        <begin position="207"/>
        <end position="210"/>
    </location>
    <ligand>
        <name>7-phospho-2-dehydro-3-deoxy-D-arabino-heptonate</name>
        <dbReference type="ChEBI" id="CHEBI:58394"/>
    </ligand>
</feature>
<feature type="binding site" evidence="1">
    <location>
        <position position="207"/>
    </location>
    <ligand>
        <name>Zn(2+)</name>
        <dbReference type="ChEBI" id="CHEBI:29105"/>
        <note>catalytic</note>
    </ligand>
</feature>
<feature type="binding site" evidence="1">
    <location>
        <position position="266"/>
    </location>
    <ligand>
        <name>7-phospho-2-dehydro-3-deoxy-D-arabino-heptonate</name>
        <dbReference type="ChEBI" id="CHEBI:58394"/>
    </ligand>
</feature>
<feature type="binding site" evidence="1">
    <location>
        <begin position="280"/>
        <end position="284"/>
    </location>
    <ligand>
        <name>7-phospho-2-dehydro-3-deoxy-D-arabino-heptonate</name>
        <dbReference type="ChEBI" id="CHEBI:58394"/>
    </ligand>
</feature>
<feature type="binding site" evidence="1">
    <location>
        <position position="287"/>
    </location>
    <ligand>
        <name>7-phospho-2-dehydro-3-deoxy-D-arabino-heptonate</name>
        <dbReference type="ChEBI" id="CHEBI:58394"/>
    </ligand>
</feature>
<feature type="binding site" evidence="1">
    <location>
        <position position="287"/>
    </location>
    <ligand>
        <name>Zn(2+)</name>
        <dbReference type="ChEBI" id="CHEBI:29105"/>
        <note>catalytic</note>
    </ligand>
</feature>
<feature type="binding site" evidence="1">
    <location>
        <position position="303"/>
    </location>
    <ligand>
        <name>7-phospho-2-dehydro-3-deoxy-D-arabino-heptonate</name>
        <dbReference type="ChEBI" id="CHEBI:58394"/>
    </ligand>
</feature>
<feature type="binding site" evidence="1">
    <location>
        <position position="303"/>
    </location>
    <ligand>
        <name>Zn(2+)</name>
        <dbReference type="ChEBI" id="CHEBI:29105"/>
        <note>catalytic</note>
    </ligand>
</feature>
<feature type="binding site" evidence="1">
    <location>
        <position position="372"/>
    </location>
    <ligand>
        <name>7-phospho-2-dehydro-3-deoxy-D-arabino-heptonate</name>
        <dbReference type="ChEBI" id="CHEBI:58394"/>
    </ligand>
</feature>
<feature type="binding site" evidence="1">
    <location>
        <begin position="883"/>
        <end position="890"/>
    </location>
    <ligand>
        <name>ATP</name>
        <dbReference type="ChEBI" id="CHEBI:30616"/>
    </ligand>
</feature>
<proteinExistence type="inferred from homology"/>
<comment type="function">
    <text evidence="1">The AROM polypeptide catalyzes 5 consecutive enzymatic reactions in prechorismate polyaromatic amino acid biosynthesis.</text>
</comment>
<comment type="catalytic activity">
    <reaction evidence="1">
        <text>7-phospho-2-dehydro-3-deoxy-D-arabino-heptonate = 3-dehydroquinate + phosphate</text>
        <dbReference type="Rhea" id="RHEA:21968"/>
        <dbReference type="ChEBI" id="CHEBI:32364"/>
        <dbReference type="ChEBI" id="CHEBI:43474"/>
        <dbReference type="ChEBI" id="CHEBI:58394"/>
        <dbReference type="EC" id="4.2.3.4"/>
    </reaction>
</comment>
<comment type="catalytic activity">
    <reaction evidence="1">
        <text>3-dehydroquinate = 3-dehydroshikimate + H2O</text>
        <dbReference type="Rhea" id="RHEA:21096"/>
        <dbReference type="ChEBI" id="CHEBI:15377"/>
        <dbReference type="ChEBI" id="CHEBI:16630"/>
        <dbReference type="ChEBI" id="CHEBI:32364"/>
        <dbReference type="EC" id="4.2.1.10"/>
    </reaction>
</comment>
<comment type="catalytic activity">
    <reaction evidence="1">
        <text>shikimate + NADP(+) = 3-dehydroshikimate + NADPH + H(+)</text>
        <dbReference type="Rhea" id="RHEA:17737"/>
        <dbReference type="ChEBI" id="CHEBI:15378"/>
        <dbReference type="ChEBI" id="CHEBI:16630"/>
        <dbReference type="ChEBI" id="CHEBI:36208"/>
        <dbReference type="ChEBI" id="CHEBI:57783"/>
        <dbReference type="ChEBI" id="CHEBI:58349"/>
        <dbReference type="EC" id="1.1.1.25"/>
    </reaction>
</comment>
<comment type="catalytic activity">
    <reaction evidence="1">
        <text>shikimate + ATP = 3-phosphoshikimate + ADP + H(+)</text>
        <dbReference type="Rhea" id="RHEA:13121"/>
        <dbReference type="ChEBI" id="CHEBI:15378"/>
        <dbReference type="ChEBI" id="CHEBI:30616"/>
        <dbReference type="ChEBI" id="CHEBI:36208"/>
        <dbReference type="ChEBI" id="CHEBI:145989"/>
        <dbReference type="ChEBI" id="CHEBI:456216"/>
        <dbReference type="EC" id="2.7.1.71"/>
    </reaction>
</comment>
<comment type="catalytic activity">
    <reaction evidence="1">
        <text>3-phosphoshikimate + phosphoenolpyruvate = 5-O-(1-carboxyvinyl)-3-phosphoshikimate + phosphate</text>
        <dbReference type="Rhea" id="RHEA:21256"/>
        <dbReference type="ChEBI" id="CHEBI:43474"/>
        <dbReference type="ChEBI" id="CHEBI:57701"/>
        <dbReference type="ChEBI" id="CHEBI:58702"/>
        <dbReference type="ChEBI" id="CHEBI:145989"/>
        <dbReference type="EC" id="2.5.1.19"/>
    </reaction>
</comment>
<comment type="cofactor">
    <cofactor>
        <name>Zn(2+)</name>
        <dbReference type="ChEBI" id="CHEBI:29105"/>
    </cofactor>
    <text>Binds 2 Zn(2+) ions per subunit.</text>
</comment>
<comment type="pathway">
    <text evidence="1">Metabolic intermediate biosynthesis; chorismate biosynthesis; chorismate from D-erythrose 4-phosphate and phosphoenolpyruvate: step 2/7.</text>
</comment>
<comment type="pathway">
    <text evidence="1">Metabolic intermediate biosynthesis; chorismate biosynthesis; chorismate from D-erythrose 4-phosphate and phosphoenolpyruvate: step 3/7.</text>
</comment>
<comment type="pathway">
    <text evidence="1">Metabolic intermediate biosynthesis; chorismate biosynthesis; chorismate from D-erythrose 4-phosphate and phosphoenolpyruvate: step 4/7.</text>
</comment>
<comment type="pathway">
    <text evidence="1">Metabolic intermediate biosynthesis; chorismate biosynthesis; chorismate from D-erythrose 4-phosphate and phosphoenolpyruvate: step 5/7.</text>
</comment>
<comment type="pathway">
    <text evidence="1">Metabolic intermediate biosynthesis; chorismate biosynthesis; chorismate from D-erythrose 4-phosphate and phosphoenolpyruvate: step 6/7.</text>
</comment>
<comment type="subunit">
    <text evidence="1">Homodimer.</text>
</comment>
<comment type="subcellular location">
    <subcellularLocation>
        <location evidence="1">Cytoplasm</location>
    </subcellularLocation>
</comment>
<comment type="similarity">
    <text evidence="1">In the N-terminal section; belongs to the sugar phosphate cyclases superfamily. Dehydroquinate synthase family.</text>
</comment>
<comment type="similarity">
    <text evidence="1">In the 2nd section; belongs to the EPSP synthase family.</text>
</comment>
<comment type="similarity">
    <text evidence="1">In the 3rd section; belongs to the shikimate kinase family.</text>
</comment>
<comment type="similarity">
    <text evidence="1">In the 4th section; belongs to the type-I 3-dehydroquinase family.</text>
</comment>
<comment type="similarity">
    <text evidence="1">In the C-terminal section; belongs to the shikimate dehydrogenase family.</text>
</comment>
<sequence>MSTANGSSPTRISILGEESIIVDYGLWLNYVTHDLLNNIPSSTYVLITDTNLHSLYVPQFETAFTSASAAATSNSSATPPPPRAPRLLTYAIPPGEGSKSRDTKAEIEDWLLEQQCTRDTVIIALGGGVIGDMIGYVAATFMRGVRFVQVPTTLLAMVDSSIGGKTAIDTPMGKNLVGAFWQPRRIYIDLAFLNTLPAREFINGMAEVIKTAAIWDAEEFSALEQNAPAILSAVRTPASAAADPNARLLPISDILKRIVLGSARVKAHIVSADEKEGGLRNLLNFGHSIGHAFEAILTPQVLHGEAVAVGMVKEAELARHLGILRPAAVARLVKCIASYDLPISLEDKRLVRMTGGKSCPVDIVLAKMAVDKKNEGKQKKIVLLSAIGKTHEPKASSVDDRAIRVVLSAAVRVQPGVRPGLKVDVTPPGSKSISNRALILAALGKGPCRIKNLLHSDDTEHMLNAIGKLRGASFSWEDDGEILVVEGRGGQLFAPSEGELYLGNAGTASRFLTTVAALCSPSSDGDATSTVLTGNARMKLRPIGALVDALRSNGINIEYMGKESSLPIRVDAAGGFGGGVIELAATVSSQYVSSLLMAAPYAKEPVTLRLVGGKPISQPYIDMTIAMMRSFGIDVQRSTTEADTYHIPQGIYTNPAEYTVESDASSATYPLAVAAITGTTCTIPNIGSASLQGDARFAVEVLRPMGCTVEQSASSTTVTGPPLGQLKGIPHVDMEPMTDAFLTASVLAAVASGTTQITGIANQRVKECNRIKAMKDQLAKFGVHCNELDDGIEVTGNSWTELTEPREIYCYDDHRVAMSFSVLSVISPHPVLILERECTGKTWPGWWDVLSGVFGVAMDGEEPLSHSTVTGSGPNNRSVFVIGMRGAGKSTAGKWMASTLGRTFMDLDTELERRHNTTIPDMVKSEVGWEGFRKFEVELLREMMETKPEGYIFSCGGGIVETPEAREALISYCRAGGAVLLVHRDTTHVLEYLNRDKSRPAWSEEIEKVYIRRKPWYQECSNFEYHSPHLGVEESAVEMPVDFARFVSLICGKSSHLREVKAKPHSFFVSLTVPNITAHTATIPKAVVGSDAVELRVDLLQDHSPEFVVRQVALLRSLCKMPIIFTVRTVSQGGRFPDADHAGALALYRVALRMGVEYVDVEMTMPEDVIETVTKAKGYTSIIASHHDPKGTLSWRNGAWMQYYNKALHYGDVIKLVGWCRTDEDNFSLLTFKTRMLAAHESTPIIALNMGEQGKLSRVLNGFMTPVTHAALPAAAAPGQLTAAEIRQALSLLSKIPKRKFYLFGKPISKSRSPILHNTLFQQTGLPHTYSRLETDKVAEVETTIRASDFGGASVTIPLKLDIMPMLDEITDAAKTIGAVNTIIPVPVQAGKQRLRGDNTDWCGMVHSLRMAGVTGKRACPASGVVVGSGGTTRAAIFALHSLGFSPIYIIARNATSVETIASSFPAEYDIRNLQGTLAYTEGMARPEVVISTIPATGDVDEGILMAVDSVLTLPMGTSNTGAARVLLEMAYTPTFTNMMARAKDAGWGTVPGFEVLAAQGWFQFQLWTDIKPVYSTASSIVMNGTSDSS</sequence>
<evidence type="ECO:0000255" key="1">
    <source>
        <dbReference type="HAMAP-Rule" id="MF_03143"/>
    </source>
</evidence>
<organism>
    <name type="scientific">Pyricularia oryzae (strain 70-15 / ATCC MYA-4617 / FGSC 8958)</name>
    <name type="common">Rice blast fungus</name>
    <name type="synonym">Magnaporthe oryzae</name>
    <dbReference type="NCBI Taxonomy" id="242507"/>
    <lineage>
        <taxon>Eukaryota</taxon>
        <taxon>Fungi</taxon>
        <taxon>Dikarya</taxon>
        <taxon>Ascomycota</taxon>
        <taxon>Pezizomycotina</taxon>
        <taxon>Sordariomycetes</taxon>
        <taxon>Sordariomycetidae</taxon>
        <taxon>Magnaporthales</taxon>
        <taxon>Pyriculariaceae</taxon>
        <taxon>Pyricularia</taxon>
    </lineage>
</organism>
<gene>
    <name type="ORF">MGG_01128</name>
</gene>
<accession>A4RD09</accession>
<accession>G4NC67</accession>
<dbReference type="EC" id="4.2.3.4" evidence="1"/>
<dbReference type="EC" id="2.5.1.19" evidence="1"/>
<dbReference type="EC" id="2.7.1.71" evidence="1"/>
<dbReference type="EC" id="4.2.1.10" evidence="1"/>
<dbReference type="EC" id="1.1.1.25" evidence="1"/>
<dbReference type="EMBL" id="CM001235">
    <property type="protein sequence ID" value="EHA48216.1"/>
    <property type="molecule type" value="Genomic_DNA"/>
</dbReference>
<dbReference type="RefSeq" id="XP_003717800.1">
    <property type="nucleotide sequence ID" value="XM_003717752.1"/>
</dbReference>
<dbReference type="SMR" id="A4RD09"/>
<dbReference type="FunCoup" id="A4RD09">
    <property type="interactions" value="445"/>
</dbReference>
<dbReference type="STRING" id="242507.A4RD09"/>
<dbReference type="EnsemblFungi" id="MGG_01128T0">
    <property type="protein sequence ID" value="MGG_01128T0"/>
    <property type="gene ID" value="MGG_01128"/>
</dbReference>
<dbReference type="GeneID" id="2674754"/>
<dbReference type="KEGG" id="mgr:MGG_01128"/>
<dbReference type="VEuPathDB" id="FungiDB:MGG_01128"/>
<dbReference type="eggNOG" id="KOG0692">
    <property type="taxonomic scope" value="Eukaryota"/>
</dbReference>
<dbReference type="HOGENOM" id="CLU_001201_1_2_1"/>
<dbReference type="InParanoid" id="A4RD09"/>
<dbReference type="OMA" id="SWANMSW"/>
<dbReference type="OrthoDB" id="197068at2759"/>
<dbReference type="UniPathway" id="UPA00053">
    <property type="reaction ID" value="UER00085"/>
</dbReference>
<dbReference type="UniPathway" id="UPA00053">
    <property type="reaction ID" value="UER00086"/>
</dbReference>
<dbReference type="UniPathway" id="UPA00053">
    <property type="reaction ID" value="UER00087"/>
</dbReference>
<dbReference type="UniPathway" id="UPA00053">
    <property type="reaction ID" value="UER00088"/>
</dbReference>
<dbReference type="UniPathway" id="UPA00053">
    <property type="reaction ID" value="UER00089"/>
</dbReference>
<dbReference type="Proteomes" id="UP000009058">
    <property type="component" value="Chromosome 5"/>
</dbReference>
<dbReference type="GO" id="GO:0005737">
    <property type="term" value="C:cytoplasm"/>
    <property type="evidence" value="ECO:0007669"/>
    <property type="project" value="UniProtKB-SubCell"/>
</dbReference>
<dbReference type="GO" id="GO:0003855">
    <property type="term" value="F:3-dehydroquinate dehydratase activity"/>
    <property type="evidence" value="ECO:0007669"/>
    <property type="project" value="UniProtKB-UniRule"/>
</dbReference>
<dbReference type="GO" id="GO:0003856">
    <property type="term" value="F:3-dehydroquinate synthase activity"/>
    <property type="evidence" value="ECO:0007669"/>
    <property type="project" value="UniProtKB-UniRule"/>
</dbReference>
<dbReference type="GO" id="GO:0003866">
    <property type="term" value="F:3-phosphoshikimate 1-carboxyvinyltransferase activity"/>
    <property type="evidence" value="ECO:0007669"/>
    <property type="project" value="UniProtKB-UniRule"/>
</dbReference>
<dbReference type="GO" id="GO:0005524">
    <property type="term" value="F:ATP binding"/>
    <property type="evidence" value="ECO:0007669"/>
    <property type="project" value="UniProtKB-UniRule"/>
</dbReference>
<dbReference type="GO" id="GO:0046872">
    <property type="term" value="F:metal ion binding"/>
    <property type="evidence" value="ECO:0007669"/>
    <property type="project" value="UniProtKB-UniRule"/>
</dbReference>
<dbReference type="GO" id="GO:0004764">
    <property type="term" value="F:shikimate 3-dehydrogenase (NADP+) activity"/>
    <property type="evidence" value="ECO:0007669"/>
    <property type="project" value="UniProtKB-UniRule"/>
</dbReference>
<dbReference type="GO" id="GO:0004765">
    <property type="term" value="F:shikimate kinase activity"/>
    <property type="evidence" value="ECO:0007669"/>
    <property type="project" value="UniProtKB-UniRule"/>
</dbReference>
<dbReference type="GO" id="GO:0008652">
    <property type="term" value="P:amino acid biosynthetic process"/>
    <property type="evidence" value="ECO:0007669"/>
    <property type="project" value="UniProtKB-KW"/>
</dbReference>
<dbReference type="GO" id="GO:0009073">
    <property type="term" value="P:aromatic amino acid family biosynthetic process"/>
    <property type="evidence" value="ECO:0007669"/>
    <property type="project" value="UniProtKB-UniRule"/>
</dbReference>
<dbReference type="GO" id="GO:0009423">
    <property type="term" value="P:chorismate biosynthetic process"/>
    <property type="evidence" value="ECO:0007669"/>
    <property type="project" value="UniProtKB-UniRule"/>
</dbReference>
<dbReference type="CDD" id="cd00502">
    <property type="entry name" value="DHQase_I"/>
    <property type="match status" value="1"/>
</dbReference>
<dbReference type="CDD" id="cd08195">
    <property type="entry name" value="DHQS"/>
    <property type="match status" value="1"/>
</dbReference>
<dbReference type="CDD" id="cd01556">
    <property type="entry name" value="EPSP_synthase"/>
    <property type="match status" value="1"/>
</dbReference>
<dbReference type="CDD" id="cd01065">
    <property type="entry name" value="NAD_bind_Shikimate_DH"/>
    <property type="match status" value="1"/>
</dbReference>
<dbReference type="CDD" id="cd00464">
    <property type="entry name" value="SK"/>
    <property type="match status" value="1"/>
</dbReference>
<dbReference type="FunFam" id="1.20.1090.10:FF:000007">
    <property type="entry name" value="Pentafunctional AROM polypeptide"/>
    <property type="match status" value="1"/>
</dbReference>
<dbReference type="FunFam" id="3.20.20.70:FF:000135">
    <property type="entry name" value="Pentafunctional AROM polypeptide"/>
    <property type="match status" value="1"/>
</dbReference>
<dbReference type="FunFam" id="3.40.50.10860:FF:000015">
    <property type="entry name" value="Pentafunctional AROM polypeptide"/>
    <property type="match status" value="1"/>
</dbReference>
<dbReference type="FunFam" id="3.40.50.1970:FF:000007">
    <property type="entry name" value="Pentafunctional AROM polypeptide"/>
    <property type="match status" value="1"/>
</dbReference>
<dbReference type="FunFam" id="3.40.50.300:FF:001256">
    <property type="entry name" value="Pentafunctional AROM polypeptide"/>
    <property type="match status" value="1"/>
</dbReference>
<dbReference type="FunFam" id="3.65.10.10:FF:000007">
    <property type="entry name" value="Pentafunctional AROM polypeptide"/>
    <property type="match status" value="1"/>
</dbReference>
<dbReference type="FunFam" id="3.65.10.10:FF:000008">
    <property type="entry name" value="Pentafunctional AROM polypeptide"/>
    <property type="match status" value="1"/>
</dbReference>
<dbReference type="Gene3D" id="3.40.50.1970">
    <property type="match status" value="1"/>
</dbReference>
<dbReference type="Gene3D" id="3.20.20.70">
    <property type="entry name" value="Aldolase class I"/>
    <property type="match status" value="1"/>
</dbReference>
<dbReference type="Gene3D" id="1.20.1090.10">
    <property type="entry name" value="Dehydroquinate synthase-like - alpha domain"/>
    <property type="match status" value="1"/>
</dbReference>
<dbReference type="Gene3D" id="3.65.10.10">
    <property type="entry name" value="Enolpyruvate transferase domain"/>
    <property type="match status" value="2"/>
</dbReference>
<dbReference type="Gene3D" id="3.40.50.10860">
    <property type="entry name" value="Leucine Dehydrogenase, chain A, domain 1"/>
    <property type="match status" value="1"/>
</dbReference>
<dbReference type="Gene3D" id="3.40.50.720">
    <property type="entry name" value="NAD(P)-binding Rossmann-like Domain"/>
    <property type="match status" value="1"/>
</dbReference>
<dbReference type="Gene3D" id="3.40.50.300">
    <property type="entry name" value="P-loop containing nucleotide triphosphate hydrolases"/>
    <property type="match status" value="1"/>
</dbReference>
<dbReference type="HAMAP" id="MF_00210">
    <property type="entry name" value="EPSP_synth"/>
    <property type="match status" value="1"/>
</dbReference>
<dbReference type="HAMAP" id="MF_03143">
    <property type="entry name" value="Pentafunct_AroM"/>
    <property type="match status" value="1"/>
</dbReference>
<dbReference type="HAMAP" id="MF_00109">
    <property type="entry name" value="Shikimate_kinase"/>
    <property type="match status" value="1"/>
</dbReference>
<dbReference type="InterPro" id="IPR018508">
    <property type="entry name" value="3-dehydroquinate_DH_AS"/>
</dbReference>
<dbReference type="InterPro" id="IPR013785">
    <property type="entry name" value="Aldolase_TIM"/>
</dbReference>
<dbReference type="InterPro" id="IPR046346">
    <property type="entry name" value="Aminoacid_DH-like_N_sf"/>
</dbReference>
<dbReference type="InterPro" id="IPR016037">
    <property type="entry name" value="DHQ_synth_AroB"/>
</dbReference>
<dbReference type="InterPro" id="IPR030960">
    <property type="entry name" value="DHQS/DOIS_N"/>
</dbReference>
<dbReference type="InterPro" id="IPR056179">
    <property type="entry name" value="DHQS_C"/>
</dbReference>
<dbReference type="InterPro" id="IPR001381">
    <property type="entry name" value="DHquinase_I"/>
</dbReference>
<dbReference type="InterPro" id="IPR001986">
    <property type="entry name" value="Enolpyruvate_Tfrase_dom"/>
</dbReference>
<dbReference type="InterPro" id="IPR036968">
    <property type="entry name" value="Enolpyruvate_Tfrase_sf"/>
</dbReference>
<dbReference type="InterPro" id="IPR006264">
    <property type="entry name" value="EPSP_synthase"/>
</dbReference>
<dbReference type="InterPro" id="IPR023193">
    <property type="entry name" value="EPSP_synthase_CS"/>
</dbReference>
<dbReference type="InterPro" id="IPR036291">
    <property type="entry name" value="NAD(P)-bd_dom_sf"/>
</dbReference>
<dbReference type="InterPro" id="IPR027417">
    <property type="entry name" value="P-loop_NTPase"/>
</dbReference>
<dbReference type="InterPro" id="IPR008289">
    <property type="entry name" value="Pentafunct_AroM"/>
</dbReference>
<dbReference type="InterPro" id="IPR013792">
    <property type="entry name" value="RNA3'P_cycl/enolpyr_Trfase_a/b"/>
</dbReference>
<dbReference type="InterPro" id="IPR031322">
    <property type="entry name" value="Shikimate/glucono_kinase"/>
</dbReference>
<dbReference type="InterPro" id="IPR013708">
    <property type="entry name" value="Shikimate_DH-bd_N"/>
</dbReference>
<dbReference type="InterPro" id="IPR010110">
    <property type="entry name" value="Shikimate_DH_AroM-type"/>
</dbReference>
<dbReference type="InterPro" id="IPR000623">
    <property type="entry name" value="Shikimate_kinase/TSH1"/>
</dbReference>
<dbReference type="InterPro" id="IPR023000">
    <property type="entry name" value="Shikimate_kinase_CS"/>
</dbReference>
<dbReference type="NCBIfam" id="TIGR01356">
    <property type="entry name" value="aroA"/>
    <property type="match status" value="1"/>
</dbReference>
<dbReference type="NCBIfam" id="TIGR01357">
    <property type="entry name" value="aroB"/>
    <property type="match status" value="1"/>
</dbReference>
<dbReference type="NCBIfam" id="TIGR01093">
    <property type="entry name" value="aroD"/>
    <property type="match status" value="1"/>
</dbReference>
<dbReference type="NCBIfam" id="TIGR01809">
    <property type="entry name" value="Shik-DH-AROM"/>
    <property type="match status" value="1"/>
</dbReference>
<dbReference type="PANTHER" id="PTHR21090">
    <property type="entry name" value="AROM/DEHYDROQUINATE SYNTHASE"/>
    <property type="match status" value="1"/>
</dbReference>
<dbReference type="PANTHER" id="PTHR21090:SF5">
    <property type="entry name" value="PENTAFUNCTIONAL AROM POLYPEPTIDE"/>
    <property type="match status" value="1"/>
</dbReference>
<dbReference type="Pfam" id="PF01761">
    <property type="entry name" value="DHQ_synthase"/>
    <property type="match status" value="1"/>
</dbReference>
<dbReference type="Pfam" id="PF24621">
    <property type="entry name" value="DHQS_C"/>
    <property type="match status" value="1"/>
</dbReference>
<dbReference type="Pfam" id="PF01487">
    <property type="entry name" value="DHquinase_I"/>
    <property type="match status" value="1"/>
</dbReference>
<dbReference type="Pfam" id="PF00275">
    <property type="entry name" value="EPSP_synthase"/>
    <property type="match status" value="1"/>
</dbReference>
<dbReference type="Pfam" id="PF08501">
    <property type="entry name" value="Shikimate_dh_N"/>
    <property type="match status" value="1"/>
</dbReference>
<dbReference type="Pfam" id="PF01202">
    <property type="entry name" value="SKI"/>
    <property type="match status" value="1"/>
</dbReference>
<dbReference type="PIRSF" id="PIRSF000514">
    <property type="entry name" value="Pentafunct_AroM"/>
    <property type="match status" value="1"/>
</dbReference>
<dbReference type="PRINTS" id="PR01100">
    <property type="entry name" value="SHIKIMTKNASE"/>
</dbReference>
<dbReference type="SUPFAM" id="SSF51569">
    <property type="entry name" value="Aldolase"/>
    <property type="match status" value="1"/>
</dbReference>
<dbReference type="SUPFAM" id="SSF53223">
    <property type="entry name" value="Aminoacid dehydrogenase-like, N-terminal domain"/>
    <property type="match status" value="1"/>
</dbReference>
<dbReference type="SUPFAM" id="SSF56796">
    <property type="entry name" value="Dehydroquinate synthase-like"/>
    <property type="match status" value="1"/>
</dbReference>
<dbReference type="SUPFAM" id="SSF55205">
    <property type="entry name" value="EPT/RTPC-like"/>
    <property type="match status" value="1"/>
</dbReference>
<dbReference type="SUPFAM" id="SSF51735">
    <property type="entry name" value="NAD(P)-binding Rossmann-fold domains"/>
    <property type="match status" value="1"/>
</dbReference>
<dbReference type="SUPFAM" id="SSF52540">
    <property type="entry name" value="P-loop containing nucleoside triphosphate hydrolases"/>
    <property type="match status" value="1"/>
</dbReference>
<dbReference type="PROSITE" id="PS01028">
    <property type="entry name" value="DEHYDROQUINASE_I"/>
    <property type="match status" value="1"/>
</dbReference>
<dbReference type="PROSITE" id="PS00104">
    <property type="entry name" value="EPSP_SYNTHASE_1"/>
    <property type="match status" value="1"/>
</dbReference>
<dbReference type="PROSITE" id="PS00885">
    <property type="entry name" value="EPSP_SYNTHASE_2"/>
    <property type="match status" value="1"/>
</dbReference>
<dbReference type="PROSITE" id="PS01128">
    <property type="entry name" value="SHIKIMATE_KINASE"/>
    <property type="match status" value="1"/>
</dbReference>
<name>ARO1_PYRO7</name>
<protein>
    <recommendedName>
        <fullName evidence="1">Pentafunctional AROM polypeptide</fullName>
    </recommendedName>
    <domain>
        <recommendedName>
            <fullName evidence="1">3-dehydroquinate synthase</fullName>
            <shortName evidence="1">DHQS</shortName>
            <ecNumber evidence="1">4.2.3.4</ecNumber>
        </recommendedName>
    </domain>
    <domain>
        <recommendedName>
            <fullName evidence="1">3-phosphoshikimate 1-carboxyvinyltransferase</fullName>
            <ecNumber evidence="1">2.5.1.19</ecNumber>
        </recommendedName>
        <alternativeName>
            <fullName evidence="1">5-enolpyruvylshikimate-3-phosphate synthase</fullName>
            <shortName evidence="1">EPSP synthase</shortName>
            <shortName evidence="1">EPSPS</shortName>
        </alternativeName>
    </domain>
    <domain>
        <recommendedName>
            <fullName evidence="1">Shikimate kinase</fullName>
            <shortName evidence="1">SK</shortName>
            <ecNumber evidence="1">2.7.1.71</ecNumber>
        </recommendedName>
    </domain>
    <domain>
        <recommendedName>
            <fullName evidence="1">3-dehydroquinate dehydratase</fullName>
            <shortName evidence="1">3-dehydroquinase</shortName>
            <ecNumber evidence="1">4.2.1.10</ecNumber>
        </recommendedName>
    </domain>
    <domain>
        <recommendedName>
            <fullName evidence="1">Shikimate dehydrogenase</fullName>
            <ecNumber evidence="1">1.1.1.25</ecNumber>
        </recommendedName>
    </domain>
</protein>
<reference key="1">
    <citation type="journal article" date="2005" name="Nature">
        <title>The genome sequence of the rice blast fungus Magnaporthe grisea.</title>
        <authorList>
            <person name="Dean R.A."/>
            <person name="Talbot N.J."/>
            <person name="Ebbole D.J."/>
            <person name="Farman M.L."/>
            <person name="Mitchell T.K."/>
            <person name="Orbach M.J."/>
            <person name="Thon M.R."/>
            <person name="Kulkarni R."/>
            <person name="Xu J.-R."/>
            <person name="Pan H."/>
            <person name="Read N.D."/>
            <person name="Lee Y.-H."/>
            <person name="Carbone I."/>
            <person name="Brown D."/>
            <person name="Oh Y.Y."/>
            <person name="Donofrio N."/>
            <person name="Jeong J.S."/>
            <person name="Soanes D.M."/>
            <person name="Djonovic S."/>
            <person name="Kolomiets E."/>
            <person name="Rehmeyer C."/>
            <person name="Li W."/>
            <person name="Harding M."/>
            <person name="Kim S."/>
            <person name="Lebrun M.-H."/>
            <person name="Bohnert H."/>
            <person name="Coughlan S."/>
            <person name="Butler J."/>
            <person name="Calvo S.E."/>
            <person name="Ma L.-J."/>
            <person name="Nicol R."/>
            <person name="Purcell S."/>
            <person name="Nusbaum C."/>
            <person name="Galagan J.E."/>
            <person name="Birren B.W."/>
        </authorList>
    </citation>
    <scope>NUCLEOTIDE SEQUENCE [LARGE SCALE GENOMIC DNA]</scope>
    <source>
        <strain>70-15 / ATCC MYA-4617 / FGSC 8958</strain>
    </source>
</reference>